<organism>
    <name type="scientific">Burkholderia mallei (strain NCTC 10229)</name>
    <dbReference type="NCBI Taxonomy" id="412022"/>
    <lineage>
        <taxon>Bacteria</taxon>
        <taxon>Pseudomonadati</taxon>
        <taxon>Pseudomonadota</taxon>
        <taxon>Betaproteobacteria</taxon>
        <taxon>Burkholderiales</taxon>
        <taxon>Burkholderiaceae</taxon>
        <taxon>Burkholderia</taxon>
        <taxon>pseudomallei group</taxon>
    </lineage>
</organism>
<accession>A2SB75</accession>
<dbReference type="EMBL" id="CP000546">
    <property type="protein sequence ID" value="ABN01316.1"/>
    <property type="molecule type" value="Genomic_DNA"/>
</dbReference>
<dbReference type="RefSeq" id="WP_004192143.1">
    <property type="nucleotide sequence ID" value="NC_008836.1"/>
</dbReference>
<dbReference type="SMR" id="A2SB75"/>
<dbReference type="GeneID" id="93060697"/>
<dbReference type="KEGG" id="bml:BMA10229_A3258"/>
<dbReference type="HOGENOM" id="CLU_073981_2_1_4"/>
<dbReference type="Proteomes" id="UP000002283">
    <property type="component" value="Chromosome I"/>
</dbReference>
<dbReference type="GO" id="GO:0005829">
    <property type="term" value="C:cytosol"/>
    <property type="evidence" value="ECO:0007669"/>
    <property type="project" value="GOC"/>
</dbReference>
<dbReference type="GO" id="GO:0043023">
    <property type="term" value="F:ribosomal large subunit binding"/>
    <property type="evidence" value="ECO:0007669"/>
    <property type="project" value="TreeGrafter"/>
</dbReference>
<dbReference type="GO" id="GO:0002184">
    <property type="term" value="P:cytoplasmic translational termination"/>
    <property type="evidence" value="ECO:0007669"/>
    <property type="project" value="TreeGrafter"/>
</dbReference>
<dbReference type="CDD" id="cd00520">
    <property type="entry name" value="RRF"/>
    <property type="match status" value="1"/>
</dbReference>
<dbReference type="FunFam" id="1.10.132.20:FF:000001">
    <property type="entry name" value="Ribosome-recycling factor"/>
    <property type="match status" value="1"/>
</dbReference>
<dbReference type="FunFam" id="3.30.1360.40:FF:000001">
    <property type="entry name" value="Ribosome-recycling factor"/>
    <property type="match status" value="1"/>
</dbReference>
<dbReference type="Gene3D" id="3.30.1360.40">
    <property type="match status" value="1"/>
</dbReference>
<dbReference type="Gene3D" id="1.10.132.20">
    <property type="entry name" value="Ribosome-recycling factor"/>
    <property type="match status" value="1"/>
</dbReference>
<dbReference type="HAMAP" id="MF_00040">
    <property type="entry name" value="RRF"/>
    <property type="match status" value="1"/>
</dbReference>
<dbReference type="InterPro" id="IPR002661">
    <property type="entry name" value="Ribosome_recyc_fac"/>
</dbReference>
<dbReference type="InterPro" id="IPR023584">
    <property type="entry name" value="Ribosome_recyc_fac_dom"/>
</dbReference>
<dbReference type="InterPro" id="IPR036191">
    <property type="entry name" value="RRF_sf"/>
</dbReference>
<dbReference type="NCBIfam" id="TIGR00496">
    <property type="entry name" value="frr"/>
    <property type="match status" value="1"/>
</dbReference>
<dbReference type="PANTHER" id="PTHR20982:SF3">
    <property type="entry name" value="MITOCHONDRIAL RIBOSOME RECYCLING FACTOR PSEUDO 1"/>
    <property type="match status" value="1"/>
</dbReference>
<dbReference type="PANTHER" id="PTHR20982">
    <property type="entry name" value="RIBOSOME RECYCLING FACTOR"/>
    <property type="match status" value="1"/>
</dbReference>
<dbReference type="Pfam" id="PF01765">
    <property type="entry name" value="RRF"/>
    <property type="match status" value="1"/>
</dbReference>
<dbReference type="SUPFAM" id="SSF55194">
    <property type="entry name" value="Ribosome recycling factor, RRF"/>
    <property type="match status" value="1"/>
</dbReference>
<protein>
    <recommendedName>
        <fullName evidence="1">Ribosome-recycling factor</fullName>
        <shortName evidence="1">RRF</shortName>
    </recommendedName>
    <alternativeName>
        <fullName evidence="1">Ribosome-releasing factor</fullName>
    </alternativeName>
</protein>
<sequence>MSVADIKKSVEQKMQRSIEAFKNDLAKIRTGRAHTGLLDHVQVDYYGSMVPISQVANLTLVDARTIGVQPWEKTMVAKVEKAIREADLGLNPATSGDLIRVPMPPLTEERRRELTKVVKSEGETAKVAVRNLRRDANEQLKKLVKDKEISEDDERRASDDVQKLTDKHVAEIDKLVQAKDAEIMTV</sequence>
<feature type="chain" id="PRO_1000003119" description="Ribosome-recycling factor">
    <location>
        <begin position="1"/>
        <end position="186"/>
    </location>
</feature>
<comment type="function">
    <text evidence="1">Responsible for the release of ribosomes from messenger RNA at the termination of protein biosynthesis. May increase the efficiency of translation by recycling ribosomes from one round of translation to another.</text>
</comment>
<comment type="subcellular location">
    <subcellularLocation>
        <location evidence="1">Cytoplasm</location>
    </subcellularLocation>
</comment>
<comment type="similarity">
    <text evidence="1">Belongs to the RRF family.</text>
</comment>
<keyword id="KW-0963">Cytoplasm</keyword>
<keyword id="KW-0648">Protein biosynthesis</keyword>
<evidence type="ECO:0000255" key="1">
    <source>
        <dbReference type="HAMAP-Rule" id="MF_00040"/>
    </source>
</evidence>
<proteinExistence type="inferred from homology"/>
<gene>
    <name evidence="1" type="primary">frr</name>
    <name type="ordered locus">BMA10229_A3258</name>
</gene>
<reference key="1">
    <citation type="journal article" date="2010" name="Genome Biol. Evol.">
        <title>Continuing evolution of Burkholderia mallei through genome reduction and large-scale rearrangements.</title>
        <authorList>
            <person name="Losada L."/>
            <person name="Ronning C.M."/>
            <person name="DeShazer D."/>
            <person name="Woods D."/>
            <person name="Fedorova N."/>
            <person name="Kim H.S."/>
            <person name="Shabalina S.A."/>
            <person name="Pearson T.R."/>
            <person name="Brinkac L."/>
            <person name="Tan P."/>
            <person name="Nandi T."/>
            <person name="Crabtree J."/>
            <person name="Badger J."/>
            <person name="Beckstrom-Sternberg S."/>
            <person name="Saqib M."/>
            <person name="Schutzer S.E."/>
            <person name="Keim P."/>
            <person name="Nierman W.C."/>
        </authorList>
    </citation>
    <scope>NUCLEOTIDE SEQUENCE [LARGE SCALE GENOMIC DNA]</scope>
    <source>
        <strain>NCTC 10229</strain>
    </source>
</reference>
<name>RRF_BURM9</name>